<sequence length="664" mass="76082">MKRRNADCSKLRRPLKRNRITEGIYGSTFLYLKFLVVWALVLLADFVLEFRFEYLWPFWLFIRSVYDSFRYQGLAFSVFFVCVAFTSNIICLLFIPIQWLFFAASTYVWVQYVWHTERGVCLPTVSLWILFVYIEAAIRFKDLKNFHVDLCRPFAAHCIGYPVVTLGFGFKSYVSYKMRLRKQKEVQKENEFYMQLLQQALPPEQQMLQKQEKEAEEAAKGLPDMDSSILIHHNGGIPANKKLSTALPEIEYREKGKEKDKDAKKHNLGINNNNILQPVDSKIQEIEYMENHINSKRLNNDLVGSTENLLKEDSCTASSKNYKNASGVVNSSPRSHSATNGSIPSSSSKNEKKQRCTSKGPSAHKDLMENCIPNNQLSKPDALVRLEQDIKKLKADLQASRQVEQELRSQISSLSSTERGIRSEMGQLRQENELLQNKLHNAVQMKQKDKQNISQLEKRLKAEQEARGFVEKQLMEEKKRKKLEEATAARAVAFAAASRGECTETLRSRIRELEAEGKKLTMDLKVKEEQIRELELKVQELRKYKENEKDTEVLMSALSAMQDKTQHLENSLSAETRIKLDLFSALGDAKRQLEIAQGQILQKDQEIKDLKQKIAEVMAVMPSITYSAATSPLSPVSPHYSSKFVETSPSGLDPNASVYQPLKK</sequence>
<reference key="1">
    <citation type="submission" date="2004-12" db="EMBL/GenBank/DDBJ databases">
        <title>Identification of macoilin as a novel membrane-associated coiled-coil tetraspanin protein.</title>
        <authorList>
            <person name="Huang C.-H."/>
            <person name="Chen Y."/>
        </authorList>
    </citation>
    <scope>NUCLEOTIDE SEQUENCE [MRNA]</scope>
</reference>
<reference key="2">
    <citation type="journal article" date="2004" name="Genome Res.">
        <title>The status, quality, and expansion of the NIH full-length cDNA project: the Mammalian Gene Collection (MGC).</title>
        <authorList>
            <consortium name="The MGC Project Team"/>
        </authorList>
    </citation>
    <scope>NUCLEOTIDE SEQUENCE [LARGE SCALE MRNA]</scope>
    <source>
        <tissue>Testis</tissue>
    </source>
</reference>
<reference key="3">
    <citation type="journal article" date="2012" name="Nat. Commun.">
        <title>Quantitative maps of protein phosphorylation sites across 14 different rat organs and tissues.</title>
        <authorList>
            <person name="Lundby A."/>
            <person name="Secher A."/>
            <person name="Lage K."/>
            <person name="Nordsborg N.B."/>
            <person name="Dmytriyev A."/>
            <person name="Lundby C."/>
            <person name="Olsen J.V."/>
        </authorList>
    </citation>
    <scope>IDENTIFICATION BY MASS SPECTROMETRY [LARGE SCALE ANALYSIS]</scope>
</reference>
<protein>
    <recommendedName>
        <fullName>Macoilin</fullName>
    </recommendedName>
    <alternativeName>
        <fullName>Macoilin-1</fullName>
    </alternativeName>
    <alternativeName>
        <fullName>Transmembrane protein 57</fullName>
    </alternativeName>
</protein>
<accession>Q4V7D3</accession>
<accession>Q2TLZ0</accession>
<keyword id="KW-0256">Endoplasmic reticulum</keyword>
<keyword id="KW-0325">Glycoprotein</keyword>
<keyword id="KW-0472">Membrane</keyword>
<keyword id="KW-0539">Nucleus</keyword>
<keyword id="KW-0597">Phosphoprotein</keyword>
<keyword id="KW-1185">Reference proteome</keyword>
<keyword id="KW-0812">Transmembrane</keyword>
<keyword id="KW-1133">Transmembrane helix</keyword>
<evidence type="ECO:0000250" key="1">
    <source>
        <dbReference type="UniProtKB" id="P91193"/>
    </source>
</evidence>
<evidence type="ECO:0000250" key="2">
    <source>
        <dbReference type="UniProtKB" id="Q7TQE6"/>
    </source>
</evidence>
<evidence type="ECO:0000250" key="3">
    <source>
        <dbReference type="UniProtKB" id="Q8N5G2"/>
    </source>
</evidence>
<evidence type="ECO:0000255" key="4"/>
<evidence type="ECO:0000256" key="5">
    <source>
        <dbReference type="SAM" id="MobiDB-lite"/>
    </source>
</evidence>
<evidence type="ECO:0000305" key="6"/>
<evidence type="ECO:0000312" key="7">
    <source>
        <dbReference type="RGD" id="1561685"/>
    </source>
</evidence>
<feature type="chain" id="PRO_0000070271" description="Macoilin">
    <location>
        <begin position="1"/>
        <end position="664"/>
    </location>
</feature>
<feature type="transmembrane region" description="Helical" evidence="4">
    <location>
        <begin position="28"/>
        <end position="48"/>
    </location>
</feature>
<feature type="transmembrane region" description="Helical" evidence="4">
    <location>
        <begin position="75"/>
        <end position="95"/>
    </location>
</feature>
<feature type="transmembrane region" description="Helical" evidence="4">
    <location>
        <begin position="120"/>
        <end position="140"/>
    </location>
</feature>
<feature type="transmembrane region" description="Helical" evidence="4">
    <location>
        <begin position="154"/>
        <end position="174"/>
    </location>
</feature>
<feature type="region of interest" description="Disordered" evidence="5">
    <location>
        <begin position="252"/>
        <end position="274"/>
    </location>
</feature>
<feature type="region of interest" description="Disordered" evidence="5">
    <location>
        <begin position="320"/>
        <end position="375"/>
    </location>
</feature>
<feature type="region of interest" description="Disordered" evidence="5">
    <location>
        <begin position="630"/>
        <end position="664"/>
    </location>
</feature>
<feature type="compositionally biased region" description="Basic and acidic residues" evidence="5">
    <location>
        <begin position="252"/>
        <end position="265"/>
    </location>
</feature>
<feature type="compositionally biased region" description="Polar residues" evidence="5">
    <location>
        <begin position="320"/>
        <end position="348"/>
    </location>
</feature>
<feature type="modified residue" description="Phosphoserine" evidence="3">
    <location>
        <position position="305"/>
    </location>
</feature>
<feature type="modified residue" description="Phosphoserine" evidence="3">
    <location>
        <position position="332"/>
    </location>
</feature>
<feature type="modified residue" description="Phosphoserine" evidence="3">
    <location>
        <position position="631"/>
    </location>
</feature>
<feature type="modified residue" description="Phosphoserine" evidence="3">
    <location>
        <position position="634"/>
    </location>
</feature>
<feature type="glycosylation site" description="N-linked (GlcNAc...) asparagine" evidence="4">
    <location>
        <position position="324"/>
    </location>
</feature>
<feature type="glycosylation site" description="N-linked (GlcNAc...) asparagine" evidence="4">
    <location>
        <position position="340"/>
    </location>
</feature>
<feature type="glycosylation site" description="N-linked (GlcNAc...) asparagine" evidence="4">
    <location>
        <position position="452"/>
    </location>
</feature>
<feature type="glycosylation site" description="N-linked (GlcNAc...) asparagine" evidence="4">
    <location>
        <position position="655"/>
    </location>
</feature>
<feature type="sequence conflict" description="In Ref. 1; AAX11919." evidence="6" ref="1">
    <original>D</original>
    <variation>V</variation>
    <location>
        <position position="301"/>
    </location>
</feature>
<proteinExistence type="evidence at protein level"/>
<gene>
    <name evidence="7" type="primary">Maco1</name>
    <name type="synonym">Tmem57</name>
</gene>
<name>MACOI_RAT</name>
<dbReference type="EMBL" id="AY845021">
    <property type="protein sequence ID" value="AAX11919.1"/>
    <property type="molecule type" value="mRNA"/>
</dbReference>
<dbReference type="EMBL" id="BC097999">
    <property type="protein sequence ID" value="AAH97999.1"/>
    <property type="molecule type" value="mRNA"/>
</dbReference>
<dbReference type="RefSeq" id="NP_001020870.2">
    <property type="nucleotide sequence ID" value="NM_001025699.2"/>
</dbReference>
<dbReference type="SMR" id="Q4V7D3"/>
<dbReference type="FunCoup" id="Q4V7D3">
    <property type="interactions" value="4296"/>
</dbReference>
<dbReference type="STRING" id="10116.ENSRNOP00000069310"/>
<dbReference type="GlyCosmos" id="Q4V7D3">
    <property type="glycosylation" value="4 sites, No reported glycans"/>
</dbReference>
<dbReference type="GlyGen" id="Q4V7D3">
    <property type="glycosylation" value="4 sites"/>
</dbReference>
<dbReference type="iPTMnet" id="Q4V7D3"/>
<dbReference type="PhosphoSitePlus" id="Q4V7D3"/>
<dbReference type="PaxDb" id="10116-ENSRNOP00000029925"/>
<dbReference type="Ensembl" id="ENSRNOT00000079536.2">
    <property type="protein sequence ID" value="ENSRNOP00000069310.1"/>
    <property type="gene ID" value="ENSRNOG00000056156.2"/>
</dbReference>
<dbReference type="GeneID" id="313618"/>
<dbReference type="KEGG" id="rno:313618"/>
<dbReference type="AGR" id="RGD:1561685"/>
<dbReference type="CTD" id="55219"/>
<dbReference type="RGD" id="1561685">
    <property type="gene designation" value="Maco1"/>
</dbReference>
<dbReference type="eggNOG" id="KOG1821">
    <property type="taxonomic scope" value="Eukaryota"/>
</dbReference>
<dbReference type="GeneTree" id="ENSGT00390000016613"/>
<dbReference type="HOGENOM" id="CLU_012823_1_0_1"/>
<dbReference type="InParanoid" id="Q4V7D3"/>
<dbReference type="OMA" id="ENTHADT"/>
<dbReference type="OrthoDB" id="10071111at2759"/>
<dbReference type="PhylomeDB" id="Q4V7D3"/>
<dbReference type="Reactome" id="R-RNO-8980692">
    <property type="pathway name" value="RHOA GTPase cycle"/>
</dbReference>
<dbReference type="PRO" id="PR:Q4V7D3"/>
<dbReference type="Proteomes" id="UP000002494">
    <property type="component" value="Chromosome 5"/>
</dbReference>
<dbReference type="Bgee" id="ENSRNOG00000056156">
    <property type="expression patterns" value="Expressed in testis and 19 other cell types or tissues"/>
</dbReference>
<dbReference type="GO" id="GO:0030424">
    <property type="term" value="C:axon"/>
    <property type="evidence" value="ECO:0000266"/>
    <property type="project" value="RGD"/>
</dbReference>
<dbReference type="GO" id="GO:0043005">
    <property type="term" value="C:neuron projection"/>
    <property type="evidence" value="ECO:0000266"/>
    <property type="project" value="RGD"/>
</dbReference>
<dbReference type="GO" id="GO:0044306">
    <property type="term" value="C:neuron projection terminus"/>
    <property type="evidence" value="ECO:0000266"/>
    <property type="project" value="RGD"/>
</dbReference>
<dbReference type="GO" id="GO:0031965">
    <property type="term" value="C:nuclear membrane"/>
    <property type="evidence" value="ECO:0000266"/>
    <property type="project" value="RGD"/>
</dbReference>
<dbReference type="GO" id="GO:0005634">
    <property type="term" value="C:nucleus"/>
    <property type="evidence" value="ECO:0000266"/>
    <property type="project" value="RGD"/>
</dbReference>
<dbReference type="GO" id="GO:0030867">
    <property type="term" value="C:rough endoplasmic reticulum membrane"/>
    <property type="evidence" value="ECO:0000250"/>
    <property type="project" value="UniProtKB"/>
</dbReference>
<dbReference type="GO" id="GO:0045202">
    <property type="term" value="C:synapse"/>
    <property type="evidence" value="ECO:0000266"/>
    <property type="project" value="RGD"/>
</dbReference>
<dbReference type="GO" id="GO:0008017">
    <property type="term" value="F:microtubule binding"/>
    <property type="evidence" value="ECO:0000318"/>
    <property type="project" value="GO_Central"/>
</dbReference>
<dbReference type="GO" id="GO:0007420">
    <property type="term" value="P:brain development"/>
    <property type="evidence" value="ECO:0000266"/>
    <property type="project" value="RGD"/>
</dbReference>
<dbReference type="GO" id="GO:0006935">
    <property type="term" value="P:chemotaxis"/>
    <property type="evidence" value="ECO:0000318"/>
    <property type="project" value="GO_Central"/>
</dbReference>
<dbReference type="GO" id="GO:0023041">
    <property type="term" value="P:neuronal signal transduction"/>
    <property type="evidence" value="ECO:0000250"/>
    <property type="project" value="UniProtKB"/>
</dbReference>
<dbReference type="InterPro" id="IPR019130">
    <property type="entry name" value="Macoilin"/>
</dbReference>
<dbReference type="PANTHER" id="PTHR47464">
    <property type="entry name" value="MACOILIN"/>
    <property type="match status" value="1"/>
</dbReference>
<dbReference type="PANTHER" id="PTHR47464:SF2">
    <property type="entry name" value="MACOILIN"/>
    <property type="match status" value="1"/>
</dbReference>
<dbReference type="Pfam" id="PF09726">
    <property type="entry name" value="Macoilin"/>
    <property type="match status" value="1"/>
</dbReference>
<organism>
    <name type="scientific">Rattus norvegicus</name>
    <name type="common">Rat</name>
    <dbReference type="NCBI Taxonomy" id="10116"/>
    <lineage>
        <taxon>Eukaryota</taxon>
        <taxon>Metazoa</taxon>
        <taxon>Chordata</taxon>
        <taxon>Craniata</taxon>
        <taxon>Vertebrata</taxon>
        <taxon>Euteleostomi</taxon>
        <taxon>Mammalia</taxon>
        <taxon>Eutheria</taxon>
        <taxon>Euarchontoglires</taxon>
        <taxon>Glires</taxon>
        <taxon>Rodentia</taxon>
        <taxon>Myomorpha</taxon>
        <taxon>Muroidea</taxon>
        <taxon>Muridae</taxon>
        <taxon>Murinae</taxon>
        <taxon>Rattus</taxon>
    </lineage>
</organism>
<comment type="function">
    <text evidence="3">Plays a role in the regulation of neuronal activity.</text>
</comment>
<comment type="subcellular location">
    <subcellularLocation>
        <location evidence="1">Rough endoplasmic reticulum membrane</location>
        <topology evidence="4">Multi-pass membrane protein</topology>
    </subcellularLocation>
    <subcellularLocation>
        <location evidence="1">Nucleus membrane</location>
        <topology evidence="4">Multi-pass membrane protein</topology>
    </subcellularLocation>
    <text evidence="2">Detected in the nucleus membrane of non-neuronal cells and in axonal outgrowths of neuronal cells.</text>
</comment>
<comment type="similarity">
    <text evidence="6">Belongs to the macoilin family.</text>
</comment>